<comment type="function">
    <text>Resistance to paromomycin.</text>
</comment>
<comment type="catalytic activity">
    <reaction>
        <text>a 2-deoxystreptamine antibiotic + acetyl-CoA = an N(3)-acetyl-2-deoxystreptamine antibiotic + CoA + H(+)</text>
        <dbReference type="Rhea" id="RHEA:12665"/>
        <dbReference type="ChEBI" id="CHEBI:15378"/>
        <dbReference type="ChEBI" id="CHEBI:57287"/>
        <dbReference type="ChEBI" id="CHEBI:57288"/>
        <dbReference type="ChEBI" id="CHEBI:57921"/>
        <dbReference type="ChEBI" id="CHEBI:77452"/>
        <dbReference type="EC" id="2.3.1.81"/>
    </reaction>
</comment>
<comment type="similarity">
    <text evidence="1">Belongs to the antibiotic N-acetyltransferase family.</text>
</comment>
<proteinExistence type="inferred from homology"/>
<accession>P30180</accession>
<gene>
    <name type="primary">aacC7</name>
</gene>
<dbReference type="EC" id="2.3.1.81"/>
<dbReference type="EMBL" id="M22999">
    <property type="protein sequence ID" value="AAA88552.1"/>
    <property type="molecule type" value="Genomic_DNA"/>
</dbReference>
<dbReference type="PIR" id="B32245">
    <property type="entry name" value="B32245"/>
</dbReference>
<dbReference type="RefSeq" id="WP_063840272.1">
    <property type="nucleotide sequence ID" value="NG_047261.1"/>
</dbReference>
<dbReference type="SMR" id="P30180"/>
<dbReference type="CARD" id="ARO:3002541">
    <property type="molecule name" value="AAC(3)-VIIa"/>
    <property type="mechanism identifier" value="ARO:0001004"/>
    <property type="mechanism name" value="antibiotic inactivation"/>
</dbReference>
<dbReference type="KEGG" id="ag:AAA88552"/>
<dbReference type="GO" id="GO:0046353">
    <property type="term" value="F:aminoglycoside 3-N-acetyltransferase activity"/>
    <property type="evidence" value="ECO:0007669"/>
    <property type="project" value="UniProtKB-EC"/>
</dbReference>
<dbReference type="GO" id="GO:0046677">
    <property type="term" value="P:response to antibiotic"/>
    <property type="evidence" value="ECO:0007669"/>
    <property type="project" value="UniProtKB-KW"/>
</dbReference>
<dbReference type="InterPro" id="IPR003679">
    <property type="entry name" value="Amioglycoside_AcTrfase"/>
</dbReference>
<dbReference type="InterPro" id="IPR028345">
    <property type="entry name" value="Antibiotic_NAT-like"/>
</dbReference>
<dbReference type="NCBIfam" id="NF033082">
    <property type="entry name" value="AAC_3"/>
    <property type="match status" value="1"/>
</dbReference>
<dbReference type="PANTHER" id="PTHR11104">
    <property type="entry name" value="AMINOGLYCOSIDE N3-ACETYLTRANSFERASE"/>
    <property type="match status" value="1"/>
</dbReference>
<dbReference type="PANTHER" id="PTHR11104:SF0">
    <property type="entry name" value="SPBETA PROPHAGE-DERIVED AMINOGLYCOSIDE N(3')-ACETYLTRANSFERASE-LIKE PROTEIN YOKD"/>
    <property type="match status" value="1"/>
</dbReference>
<dbReference type="Pfam" id="PF02522">
    <property type="entry name" value="Antibiotic_NAT"/>
    <property type="match status" value="1"/>
</dbReference>
<dbReference type="SUPFAM" id="SSF110710">
    <property type="entry name" value="TTHA0583/YokD-like"/>
    <property type="match status" value="1"/>
</dbReference>
<evidence type="ECO:0000305" key="1"/>
<keyword id="KW-0012">Acyltransferase</keyword>
<keyword id="KW-0046">Antibiotic resistance</keyword>
<keyword id="KW-0808">Transferase</keyword>
<organism>
    <name type="scientific">Streptomyces paromomycinus</name>
    <name type="common">Streptomyces rimosus subsp. paromomycinus</name>
    <dbReference type="NCBI Taxonomy" id="92743"/>
    <lineage>
        <taxon>Bacteria</taxon>
        <taxon>Bacillati</taxon>
        <taxon>Actinomycetota</taxon>
        <taxon>Actinomycetes</taxon>
        <taxon>Kitasatosporales</taxon>
        <taxon>Streptomycetaceae</taxon>
        <taxon>Streptomyces</taxon>
    </lineage>
</organism>
<name>AACC7_STREY</name>
<sequence>MDELALLKRSDGPVTRTRLARDLTALGLGDGDTVMFHTRMSAVGYVAGGPETVIGALRDVVGERGTLMVTCGWNDAPPYDFTDWPQTWQDARRAEHPAYDPVLSEADHNNGRLPEALRRRPGAVRSRHPDASFAALGAAATALTADHPWDDPHGPDSPLARLVAMGGRVLLLGAPLEALTLLHHAEALADAPGKRFVDYEQPILVDGERVWRRFHDIDSEDGAFDYSALVPEGTEAFEIIGRDMRAAGIGRRGTVGAADSHLFEARDVVDFGVAWMEEKLGRERGPGG</sequence>
<reference key="1">
    <citation type="journal article" date="1989" name="J. Bacteriol.">
        <title>Isolation and nucleotide sequencing of an aminocyclitol acetyltransferase gene from Streptomyces rimosus forma paromomycinus.</title>
        <authorList>
            <person name="Lopez-Cabrera M."/>
            <person name="Perez-Gonzalez J.A."/>
            <person name="Heinzel P."/>
            <person name="Piepersberg W."/>
            <person name="Jimenez A."/>
        </authorList>
    </citation>
    <scope>NUCLEOTIDE SEQUENCE [GENOMIC DNA]</scope>
    <source>
        <strain>ATCC 14827 / DSM 41429 / JCM 4541 / KCC S-0541 / NBRC 15454 / NRRL 2455 / VKM Ac-605</strain>
    </source>
</reference>
<protein>
    <recommendedName>
        <fullName>Aminoglycoside N(3)-acetyltransferase VII</fullName>
        <ecNumber>2.3.1.81</ecNumber>
    </recommendedName>
    <alternativeName>
        <fullName>ACC(3)-VII</fullName>
    </alternativeName>
    <alternativeName>
        <fullName>Aminocyclitol 3-N-acetyltransferase type VII</fullName>
    </alternativeName>
</protein>
<feature type="chain" id="PRO_0000068549" description="Aminoglycoside N(3)-acetyltransferase VII">
    <location>
        <begin position="1"/>
        <end position="288"/>
    </location>
</feature>